<gene>
    <name type="primary">Trpm6</name>
</gene>
<protein>
    <recommendedName>
        <fullName>Transient receptor potential cation channel subfamily M member 6</fullName>
        <ecNumber evidence="10">2.7.11.1</ecNumber>
    </recommendedName>
    <alternativeName>
        <fullName>Channel kinase 2</fullName>
    </alternativeName>
    <alternativeName>
        <fullName>Melastatin-related TRP cation channel 6</fullName>
    </alternativeName>
    <component>
        <recommendedName>
            <fullName evidence="4">TRPM6 kinase, cleaved form</fullName>
        </recommendedName>
    </component>
</protein>
<accession>Q8CIR4</accession>
<accession>A0A1W5LU38</accession>
<proteinExistence type="evidence at protein level"/>
<reference key="1">
    <citation type="submission" date="2002-07" db="EMBL/GenBank/DDBJ databases">
        <authorList>
            <person name="Ryazanova L.V."/>
            <person name="Ryazanov A.G."/>
        </authorList>
    </citation>
    <scope>NUCLEOTIDE SEQUENCE [MRNA]</scope>
    <source>
        <strain>BALB/cJ</strain>
        <tissue>Kidney</tissue>
    </source>
</reference>
<reference key="2">
    <citation type="submission" date="2016-06" db="EMBL/GenBank/DDBJ databases">
        <title>Functional characterization of mouse TRPM6.</title>
        <authorList>
            <person name="Chubanov V."/>
            <person name="Gudermann T."/>
        </authorList>
    </citation>
    <scope>NUCLEOTIDE SEQUENCE [MRNA]</scope>
</reference>
<reference key="3">
    <citation type="journal article" date="2009" name="Hum. Mol. Genet.">
        <title>Mice defective in Trpm6 show embryonic mortality and neural tube defects.</title>
        <authorList>
            <person name="Walder R.Y."/>
            <person name="Yang B."/>
            <person name="Stokes J.B."/>
            <person name="Kirby P.A."/>
            <person name="Cao X."/>
            <person name="Shi P."/>
            <person name="Searby C.C."/>
            <person name="Husted R.F."/>
            <person name="Sheffield V.C."/>
        </authorList>
    </citation>
    <scope>DISRUPTION PHENOTYPE</scope>
</reference>
<reference key="4">
    <citation type="journal article" date="2016" name="Elife">
        <title>Epithelial magnesium transport by TRPM6 is essential for prenatal development and adult survival.</title>
        <authorList>
            <person name="Chubanov V."/>
            <person name="Ferioli S."/>
            <person name="Wisnowsky A."/>
            <person name="Simmons D.G."/>
            <person name="Leitzinger C."/>
            <person name="Einer C."/>
            <person name="Jonas W."/>
            <person name="Shymkiv Y."/>
            <person name="Bartsch H."/>
            <person name="Braun A."/>
            <person name="Akdogan B."/>
            <person name="Mittermeier L."/>
            <person name="Sytik L."/>
            <person name="Torben F."/>
            <person name="Jurinovic V."/>
            <person name="van der Vorst E.P."/>
            <person name="Weber C."/>
            <person name="Yildirim O.A."/>
            <person name="Sotlar K."/>
            <person name="Schuermann A."/>
            <person name="Zierler S."/>
            <person name="Zischka H."/>
            <person name="Ryazanov A.G."/>
            <person name="Gudermann T."/>
        </authorList>
    </citation>
    <scope>FUNCTION</scope>
    <scope>DISRUPTION PHENOTYPE</scope>
</reference>
<reference key="5">
    <citation type="journal article" date="2017" name="Sci. Rep.">
        <title>TRPM6 and TRPM7 differentially contribute to the relief of heteromeric TRPM6/7 channels from inhibition by cytosolic Mg2+ and Mg.ATP.</title>
        <authorList>
            <person name="Ferioli S."/>
            <person name="Zierler S."/>
            <person name="Zaisserer J."/>
            <person name="Schredelseker J."/>
            <person name="Gudermann T."/>
            <person name="Chubanov V."/>
        </authorList>
    </citation>
    <scope>FUNCTION</scope>
    <scope>CATALYTIC ACTIVITY</scope>
    <scope>TRANSPORTER ACTIVITY</scope>
    <scope>SUBUNIT</scope>
    <scope>ACTIVITY REGULATION</scope>
    <scope>PHOSPHORYLATION AT THR-1730</scope>
    <scope>MUTAGENESIS OF LYS-1810</scope>
</reference>
<keyword id="KW-0067">ATP-binding</keyword>
<keyword id="KW-0106">Calcium</keyword>
<keyword id="KW-0107">Calcium channel</keyword>
<keyword id="KW-0109">Calcium transport</keyword>
<keyword id="KW-1003">Cell membrane</keyword>
<keyword id="KW-0407">Ion channel</keyword>
<keyword id="KW-0406">Ion transport</keyword>
<keyword id="KW-0418">Kinase</keyword>
<keyword id="KW-0472">Membrane</keyword>
<keyword id="KW-0479">Metal-binding</keyword>
<keyword id="KW-0547">Nucleotide-binding</keyword>
<keyword id="KW-0539">Nucleus</keyword>
<keyword id="KW-0597">Phosphoprotein</keyword>
<keyword id="KW-1185">Reference proteome</keyword>
<keyword id="KW-0723">Serine/threonine-protein kinase</keyword>
<keyword id="KW-0808">Transferase</keyword>
<keyword id="KW-0812">Transmembrane</keyword>
<keyword id="KW-1133">Transmembrane helix</keyword>
<keyword id="KW-0813">Transport</keyword>
<keyword id="KW-0862">Zinc</keyword>
<comment type="function">
    <text evidence="4 9 10">Bifunctional protein that combines an ion channel with an intrinsic kinase domain, enabling it to modulate cellular functions either by conducting ions through the pore or by phosphorylating downstream proteins via its kinase domain (PubMed:27991852, PubMed:28821869). Crucial for Mg(2+) homeostasis. Has an important role in epithelial magnesium transport and in the active Mg(2+) absorption in the gut and kidney (PubMed:27991852). However, whether TRPM6 forms functional homomeric channels by itself or functions primarily as a subunit of heteromeric TRPM6-TRPM7 channels, is still under debate (By similarity).</text>
</comment>
<comment type="function">
    <molecule>TRPM6 kinase, cleaved form</molecule>
    <text evidence="4">The C-terminal kinase domain can be cleaved from the channel segment in a cell-type-specific fashion. The cleaved kinase fragments can translocate to the nucleus, and bind chromatin-remodeling complex proteins to ultimately phosphorylate specific Ser/Thr residues of histones known to be functionally important for cell differentiation and development.</text>
</comment>
<comment type="catalytic activity">
    <reaction evidence="3">
        <text>L-seryl-[protein] + ATP = O-phospho-L-seryl-[protein] + ADP + H(+)</text>
        <dbReference type="Rhea" id="RHEA:17989"/>
        <dbReference type="Rhea" id="RHEA-COMP:9863"/>
        <dbReference type="Rhea" id="RHEA-COMP:11604"/>
        <dbReference type="ChEBI" id="CHEBI:15378"/>
        <dbReference type="ChEBI" id="CHEBI:29999"/>
        <dbReference type="ChEBI" id="CHEBI:30616"/>
        <dbReference type="ChEBI" id="CHEBI:83421"/>
        <dbReference type="ChEBI" id="CHEBI:456216"/>
        <dbReference type="EC" id="2.7.11.1"/>
    </reaction>
</comment>
<comment type="catalytic activity">
    <reaction evidence="10">
        <text>L-threonyl-[protein] + ATP = O-phospho-L-threonyl-[protein] + ADP + H(+)</text>
        <dbReference type="Rhea" id="RHEA:46608"/>
        <dbReference type="Rhea" id="RHEA-COMP:11060"/>
        <dbReference type="Rhea" id="RHEA-COMP:11605"/>
        <dbReference type="ChEBI" id="CHEBI:15378"/>
        <dbReference type="ChEBI" id="CHEBI:30013"/>
        <dbReference type="ChEBI" id="CHEBI:30616"/>
        <dbReference type="ChEBI" id="CHEBI:61977"/>
        <dbReference type="ChEBI" id="CHEBI:456216"/>
        <dbReference type="EC" id="2.7.11.1"/>
    </reaction>
</comment>
<comment type="catalytic activity">
    <reaction evidence="10">
        <text>Mg(2+)(in) = Mg(2+)(out)</text>
        <dbReference type="Rhea" id="RHEA:29827"/>
        <dbReference type="ChEBI" id="CHEBI:18420"/>
    </reaction>
</comment>
<comment type="catalytic activity">
    <reaction evidence="10">
        <text>Ca(2+)(in) = Ca(2+)(out)</text>
        <dbReference type="Rhea" id="RHEA:29671"/>
        <dbReference type="ChEBI" id="CHEBI:29108"/>
    </reaction>
</comment>
<comment type="catalytic activity">
    <reaction evidence="10">
        <text>Zn(2+)(in) = Zn(2+)(out)</text>
        <dbReference type="Rhea" id="RHEA:29351"/>
        <dbReference type="ChEBI" id="CHEBI:29105"/>
    </reaction>
</comment>
<comment type="activity regulation">
    <text evidence="4 10">Strongly inhibited by intracellular Mg(2+); unlikely to be active at physiological levels of intracellular Mg(2+) (PubMed:28821869). In the heteromeric TRPM6-TRPM7 channels complexes, TRPM7 are able to offset the very high sensitivity of TRPM6 to cytosolic Mg(2+) to physiologically relevant concentrations, whereas TRPM6 relieve TRPM7 from the inhibitory action of Mg-ATP. Consequently, the association of TRPM6 with TRPM7 allow for high constitutive activity of TRPM6/7 in the presence of physiological levels of Mg(2+) and Mg-ATP (PubMed:28821869). The kinase activity is controlled through the autophosphorylation of a serine/threonine-rich region located to the N-terminal of the catalytic domain (By similarity).</text>
</comment>
<comment type="subunit">
    <text evidence="4 10">Forms heteromers with TRPM7; TRPM6 increases the current amplitude of TRPM6/7 heteromers as compared to TRPM7 homomers (PubMed:28821869). Interacts (via kinase domain) with RACK1 (By similarity).</text>
</comment>
<comment type="subcellular location">
    <subcellularLocation>
        <location evidence="4">Cell membrane</location>
        <topology evidence="11">Multi-pass membrane protein</topology>
    </subcellularLocation>
    <subcellularLocation>
        <location evidence="4">Apical cell membrane</location>
        <topology evidence="11">Multi-pass membrane protein</topology>
    </subcellularLocation>
    <text evidence="4">TRPM6 requires the presence of TRPM7 to be targeted to the cell membrane.</text>
</comment>
<comment type="subcellular location">
    <molecule>TRPM6 kinase, cleaved form</molecule>
    <subcellularLocation>
        <location evidence="4">Nucleus</location>
    </subcellularLocation>
</comment>
<comment type="PTM">
    <text evidence="4">Autophosphorylated; autophosphorylation controls the protein kinase activity of TRPM6 towards their substrates. Autophosphorylation of Thr-1857 in the kinase domain is essential for the inhibitory effect of RACK1.</text>
</comment>
<comment type="PTM">
    <text evidence="4">The C-terminus of TRPM6 is proteolytically cleaved in vivo, in a cell type-specific fashion, releasing the kinase module from the transmembrane domain. The cleaved kinase fragments are translocated to the nucleus to phosphorylate histones and regulate gene expression.</text>
</comment>
<comment type="disruption phenotype">
    <text evidence="8 9">Mutant homozygous exhibit embryonic and postnatal lethality with exencephaly, spina bifida occulta, and abnormal brain and facial development (PubMed:19692351). Intestine-specific TRPM6 knockout mice suffer from hypomagnesemia, whereas kidney-specific TRPM6 knockout display normal Mg(2+) homeostasis (PubMed:27991852).</text>
</comment>
<comment type="similarity">
    <text evidence="11">In the C-terminal section; belongs to the protein kinase superfamily. Alpha-type protein kinase family. ALPK subfamily.</text>
</comment>
<comment type="similarity">
    <text evidence="11">In the N-terminal section; belongs to the transient receptor (TC 1.A.4) family. LTrpC subfamily. TRPM6 sub-subfamily.</text>
</comment>
<comment type="caution">
    <text evidence="4">Whether TRPM6 forms functional homomeric channels by itself is still under debate. According to some studies, TRPM6 are able to form TRPM6 channels with similar properties to those of TRPM7, with biophysical characteristics resembling those of TRPM7 including the high channel pore selectivity for divalent cations and regulation by intracellular Mg(2+) (By similarity). In contrast, others studies report that TRPM6 does not produce functional currents by itself and TRPM6 does not efficiently form homotetramers channels in the plasma membrane, but requires TRPM7 to be co-targeted to the cell surface (By similarity). Further, homotetramers TRPM6 are highly sensitive to intracellular free Mg(2+) and therefore unlikely to be active at physiological levels of intracellular Mg(2+) (By similarity).</text>
</comment>
<dbReference type="EC" id="2.7.11.1" evidence="10"/>
<dbReference type="EMBL" id="AY135644">
    <property type="protein sequence ID" value="AAN15217.1"/>
    <property type="molecule type" value="mRNA"/>
</dbReference>
<dbReference type="EMBL" id="KX375810">
    <property type="protein sequence ID" value="ANO39918.1"/>
    <property type="molecule type" value="mRNA"/>
</dbReference>
<dbReference type="CCDS" id="CCDS29691.1"/>
<dbReference type="RefSeq" id="NP_700466.1">
    <property type="nucleotide sequence ID" value="NM_153417.2"/>
</dbReference>
<dbReference type="SMR" id="Q8CIR4"/>
<dbReference type="BioGRID" id="230456">
    <property type="interactions" value="3"/>
</dbReference>
<dbReference type="FunCoup" id="Q8CIR4">
    <property type="interactions" value="93"/>
</dbReference>
<dbReference type="STRING" id="10090.ENSMUSP00000037443"/>
<dbReference type="GlyGen" id="Q8CIR4">
    <property type="glycosylation" value="1 site"/>
</dbReference>
<dbReference type="iPTMnet" id="Q8CIR4"/>
<dbReference type="PhosphoSitePlus" id="Q8CIR4"/>
<dbReference type="jPOST" id="Q8CIR4"/>
<dbReference type="PaxDb" id="10090-ENSMUSP00000037443"/>
<dbReference type="ProteomicsDB" id="300025"/>
<dbReference type="Antibodypedia" id="2049">
    <property type="antibodies" value="136 antibodies from 24 providers"/>
</dbReference>
<dbReference type="DNASU" id="225997"/>
<dbReference type="Ensembl" id="ENSMUST00000040489.9">
    <property type="protein sequence ID" value="ENSMUSP00000037443.8"/>
    <property type="gene ID" value="ENSMUSG00000024727.10"/>
</dbReference>
<dbReference type="GeneID" id="225997"/>
<dbReference type="KEGG" id="mmu:225997"/>
<dbReference type="UCSC" id="uc008gya.1">
    <property type="organism name" value="mouse"/>
</dbReference>
<dbReference type="AGR" id="MGI:2675603"/>
<dbReference type="CTD" id="140803"/>
<dbReference type="MGI" id="MGI:2675603">
    <property type="gene designation" value="Trpm6"/>
</dbReference>
<dbReference type="VEuPathDB" id="HostDB:ENSMUSG00000024727"/>
<dbReference type="eggNOG" id="KOG3614">
    <property type="taxonomic scope" value="Eukaryota"/>
</dbReference>
<dbReference type="GeneTree" id="ENSGT00940000158164"/>
<dbReference type="HOGENOM" id="CLU_001390_2_0_1"/>
<dbReference type="InParanoid" id="Q8CIR4"/>
<dbReference type="OMA" id="EVVQTWY"/>
<dbReference type="OrthoDB" id="301415at2759"/>
<dbReference type="PhylomeDB" id="Q8CIR4"/>
<dbReference type="TreeFam" id="TF314204"/>
<dbReference type="Reactome" id="R-MMU-3295583">
    <property type="pathway name" value="TRP channels"/>
</dbReference>
<dbReference type="BioGRID-ORCS" id="225997">
    <property type="hits" value="3 hits in 80 CRISPR screens"/>
</dbReference>
<dbReference type="ChiTaRS" id="Trpm6">
    <property type="organism name" value="mouse"/>
</dbReference>
<dbReference type="PRO" id="PR:Q8CIR4"/>
<dbReference type="Proteomes" id="UP000000589">
    <property type="component" value="Chromosome 19"/>
</dbReference>
<dbReference type="RNAct" id="Q8CIR4">
    <property type="molecule type" value="protein"/>
</dbReference>
<dbReference type="Bgee" id="ENSMUSG00000024727">
    <property type="expression patterns" value="Expressed in conjunctival fornix and 69 other cell types or tissues"/>
</dbReference>
<dbReference type="ExpressionAtlas" id="Q8CIR4">
    <property type="expression patterns" value="baseline and differential"/>
</dbReference>
<dbReference type="GO" id="GO:0016324">
    <property type="term" value="C:apical plasma membrane"/>
    <property type="evidence" value="ECO:0000314"/>
    <property type="project" value="MGI"/>
</dbReference>
<dbReference type="GO" id="GO:0031526">
    <property type="term" value="C:brush border membrane"/>
    <property type="evidence" value="ECO:0000314"/>
    <property type="project" value="MGI"/>
</dbReference>
<dbReference type="GO" id="GO:0005634">
    <property type="term" value="C:nucleus"/>
    <property type="evidence" value="ECO:0007669"/>
    <property type="project" value="UniProtKB-SubCell"/>
</dbReference>
<dbReference type="GO" id="GO:0005524">
    <property type="term" value="F:ATP binding"/>
    <property type="evidence" value="ECO:0007669"/>
    <property type="project" value="UniProtKB-KW"/>
</dbReference>
<dbReference type="GO" id="GO:0005262">
    <property type="term" value="F:calcium channel activity"/>
    <property type="evidence" value="ECO:0007669"/>
    <property type="project" value="UniProtKB-KW"/>
</dbReference>
<dbReference type="GO" id="GO:0015095">
    <property type="term" value="F:magnesium ion transmembrane transporter activity"/>
    <property type="evidence" value="ECO:0007669"/>
    <property type="project" value="Ensembl"/>
</dbReference>
<dbReference type="GO" id="GO:0046872">
    <property type="term" value="F:metal ion binding"/>
    <property type="evidence" value="ECO:0007669"/>
    <property type="project" value="UniProtKB-KW"/>
</dbReference>
<dbReference type="GO" id="GO:0005261">
    <property type="term" value="F:monoatomic cation channel activity"/>
    <property type="evidence" value="ECO:0000314"/>
    <property type="project" value="MGI"/>
</dbReference>
<dbReference type="GO" id="GO:0004672">
    <property type="term" value="F:protein kinase activity"/>
    <property type="evidence" value="ECO:0000315"/>
    <property type="project" value="UniProtKB"/>
</dbReference>
<dbReference type="GO" id="GO:0106310">
    <property type="term" value="F:protein serine kinase activity"/>
    <property type="evidence" value="ECO:0007669"/>
    <property type="project" value="RHEA"/>
</dbReference>
<dbReference type="GO" id="GO:0004674">
    <property type="term" value="F:protein serine/threonine kinase activity"/>
    <property type="evidence" value="ECO:0007669"/>
    <property type="project" value="UniProtKB-KW"/>
</dbReference>
<dbReference type="GO" id="GO:0030001">
    <property type="term" value="P:metal ion transport"/>
    <property type="evidence" value="ECO:0000314"/>
    <property type="project" value="MGI"/>
</dbReference>
<dbReference type="GO" id="GO:0051262">
    <property type="term" value="P:protein tetramerization"/>
    <property type="evidence" value="ECO:0007669"/>
    <property type="project" value="InterPro"/>
</dbReference>
<dbReference type="GO" id="GO:0009636">
    <property type="term" value="P:response to toxic substance"/>
    <property type="evidence" value="ECO:0007669"/>
    <property type="project" value="Ensembl"/>
</dbReference>
<dbReference type="CDD" id="cd16972">
    <property type="entry name" value="Alpha_kinase_ChaK2_TRPM6"/>
    <property type="match status" value="1"/>
</dbReference>
<dbReference type="FunFam" id="1.20.5.1010:FF:000002">
    <property type="entry name" value="Transient receptor potential cation channel subfamily M member 7"/>
    <property type="match status" value="1"/>
</dbReference>
<dbReference type="FunFam" id="3.20.200.10:FF:000001">
    <property type="entry name" value="Transient receptor potential cation channel, subfamily M, member 7"/>
    <property type="match status" value="1"/>
</dbReference>
<dbReference type="FunFam" id="3.30.200.20:FF:000129">
    <property type="entry name" value="Transient receptor potential cation channel, subfamily M, member 7"/>
    <property type="match status" value="1"/>
</dbReference>
<dbReference type="Gene3D" id="3.20.200.10">
    <property type="entry name" value="MHCK/EF2 kinase"/>
    <property type="match status" value="1"/>
</dbReference>
<dbReference type="Gene3D" id="3.30.200.20">
    <property type="entry name" value="Phosphorylase Kinase, domain 1"/>
    <property type="match status" value="1"/>
</dbReference>
<dbReference type="Gene3D" id="1.20.5.1010">
    <property type="entry name" value="TRPM, tetramerisation domain"/>
    <property type="match status" value="1"/>
</dbReference>
<dbReference type="InterPro" id="IPR004166">
    <property type="entry name" value="a-kinase_dom"/>
</dbReference>
<dbReference type="InterPro" id="IPR005821">
    <property type="entry name" value="Ion_trans_dom"/>
</dbReference>
<dbReference type="InterPro" id="IPR011009">
    <property type="entry name" value="Kinase-like_dom_sf"/>
</dbReference>
<dbReference type="InterPro" id="IPR050927">
    <property type="entry name" value="TRPM"/>
</dbReference>
<dbReference type="InterPro" id="IPR029597">
    <property type="entry name" value="TRPM6_a-kinase_dom"/>
</dbReference>
<dbReference type="InterPro" id="IPR041491">
    <property type="entry name" value="TRPM_SLOG"/>
</dbReference>
<dbReference type="InterPro" id="IPR032415">
    <property type="entry name" value="TRPM_tetra"/>
</dbReference>
<dbReference type="InterPro" id="IPR037162">
    <property type="entry name" value="TRPM_tetra_sf"/>
</dbReference>
<dbReference type="PANTHER" id="PTHR13800:SF15">
    <property type="entry name" value="TRANSIENT RECEPTOR POTENTIAL CATION CHANNEL SUBFAMILY M MEMBER 6"/>
    <property type="match status" value="1"/>
</dbReference>
<dbReference type="PANTHER" id="PTHR13800">
    <property type="entry name" value="TRANSIENT RECEPTOR POTENTIAL CATION CHANNEL, SUBFAMILY M, MEMBER 6"/>
    <property type="match status" value="1"/>
</dbReference>
<dbReference type="Pfam" id="PF02816">
    <property type="entry name" value="Alpha_kinase"/>
    <property type="match status" value="1"/>
</dbReference>
<dbReference type="Pfam" id="PF00520">
    <property type="entry name" value="Ion_trans"/>
    <property type="match status" value="1"/>
</dbReference>
<dbReference type="Pfam" id="PF18139">
    <property type="entry name" value="LSDAT_euk"/>
    <property type="match status" value="1"/>
</dbReference>
<dbReference type="Pfam" id="PF25508">
    <property type="entry name" value="TRPM2"/>
    <property type="match status" value="2"/>
</dbReference>
<dbReference type="Pfam" id="PF16519">
    <property type="entry name" value="TRPM_tetra"/>
    <property type="match status" value="1"/>
</dbReference>
<dbReference type="SMART" id="SM00811">
    <property type="entry name" value="Alpha_kinase"/>
    <property type="match status" value="1"/>
</dbReference>
<dbReference type="SUPFAM" id="SSF56112">
    <property type="entry name" value="Protein kinase-like (PK-like)"/>
    <property type="match status" value="1"/>
</dbReference>
<dbReference type="PROSITE" id="PS51158">
    <property type="entry name" value="ALPHA_KINASE"/>
    <property type="match status" value="1"/>
</dbReference>
<sequence>MQVKKSWIEGVFYKRECNKFIPSSKDPHRCTPGCQICHNLVRCYCGRLIEEHHGLDRAWNLSVTEGHGDEQWSVEKHTVKSPTDTFGTINFQDGEHIHHSKYIRTSWDTKSDHLLHLMLKEWNMELPKLVISVHGGLQNFKISSKLKETFSQGLVKAAETTGAWIITEGINSGVSKHVGDALKAHSSKSLRKIWTVGIPPWGVIENQRELVGKDVVCMYQTLGNPLSKLTTLNCMHSHFILCDDGTVGMYGNEEKLRRNLEKHLSMQKIHTCSRQGVPVVGLVMEGGPNVILWVWETVKNKEPVVVCEGTGRAADLLAFTYKHLEDGGILRPQVKEELFCLIQNMFNFSLRQSKHLFQILMECMVHKDSITIFDADSEEHQDLDLAILTALLKGTSLSISEQLNLAMAWDRMDIAKKHILTYGQHWKPGALEQAMLDALVMDRVDFVKLLIENGVNLHRFLTIPRLEELYNTKQGPTNKFLRHLVQDVKQHTLLSSYRITLIDIGLVIEYLIGGAYRSSYTRKSFRILYNNLYRKHKSVSSFAQGLSQHSLHQRHSLRNRKESSESTLHSQFFRTAQPYKSKEKPEDSQKSKKKSKERQSLSEEPEAAGFIYPYNDLLVWAVLMKRQNMAMFFWQHGEEATVKAVIASILYRAMAREAKESNMVDDTSEELKNYSEQFGQLALDVLEKAFKQNEPMAMKLLTYELKNWSNSTCLKLAVSGGLRPFVSHSCTQMLLTDMWMGRLKMRKNSWLKIIISILLPPMILTLEFKSKAEMSHVPQSQDFQFTWNYSDQGLSNTKESACVKDYDLERGPDEKPDEPLHLDLRNVPQSLPWTRRVYEFYSAPFVKFWFYTMAYLAFLMLFTYTVLVEMQPQPSVHEWLVIIYIFTNAIEKVREICISEPSKFKQKVKMWLSEYWNLMETVAIGLFAVGFGLRWGHPPLQTAGRLIYCIDIIFWFSRLMDFFAVNQHAGPYVTMIAKMAANMFYIVIIMAIVLLSFGVARKAILSPKEPPSWRLARDIVFEPYWMMYGEVYASDIDVCSNETSCPPGSFLTPFLQAVYLFVQYIIMVNLLIACFNNIYLDIKSISNKLWKYNRYRYIMTYHQKPWLPPPFILLNHLCLLLRGLCCRPAPQDQEEGDGGLKLYLTKDDLKKLHDFEEQCVEKYFHEKTEGLNCSFEEQIRMTSERVSEMFFQLKEMNEKVSFIKDSLLSLDSQVGHLQDLSAITVDTLKVLSAVDTLQEDEILLANRKHSTCRKRPHSWTNVICAKVLSDMESCGKKKLQYYSMPPSLLRSLARSQLPPSVQRGALVEVTHSKREASHVREEQEEREMEQRTTASGISHVRQAHSKYGQFLLVPSSGKQVPLSLETPPHLFRSSEEAGIDGLVLEHIHQSDLTTHLPQQTPAASHQALVAEHKDQHEAVTQMSDKPAKAEQDLLAFSGTPAPMTVTSLPSRAISMQDEGGYVNWAFSENDETGVFSFKKKWKTCLASTCNSDSNPGGDYFLHTGGRSGLDNSRRLAQSCECPAGPWTQARRSFWINPLCRDKALIKSHSFRFHKEEKLRKTWKNNSHSKSLETRSTWLKAKLLTKTRSLSKKKRKTQGLQVPVITVNACYQSDQLNAEPGETNTTEEFSKKWLSVSNFSQIGLEPYIYQKMKMKEIKRHTTQASDHLRQPQENRDKTPTWNSGSTSLSRSFLTRSPNEVHKISTSLKSPQEPHHHYSAIERNNLMRLSQTIPFTPIQLFTGEEVTIYKLEESSPLTLDKSMSSWSQHGRAAMIQVLSQEEMDGGLRKAMRVISTWSEDDVLKPGQVFIVKSFLPEVVQTWYKIFQESTVLHLCLREIQQQRAAQKLIYTFNQVKPQTIPYTPRFLEVSLVYCHSANQWLTIEKYMTGEFRKYNNNNGDEIAPTNTLEELMLAFSHWTYEYTRGELLVLDLQGVGENLTDPSVIKPEDKQSRGMVFGPANLGEDAIRSFIAKHRCNSCCGKLRLPDLKRNDYSLSRTHCNLGFGQTIEPTEELPERDKNRSSLEDHTRL</sequence>
<organism>
    <name type="scientific">Mus musculus</name>
    <name type="common">Mouse</name>
    <dbReference type="NCBI Taxonomy" id="10090"/>
    <lineage>
        <taxon>Eukaryota</taxon>
        <taxon>Metazoa</taxon>
        <taxon>Chordata</taxon>
        <taxon>Craniata</taxon>
        <taxon>Vertebrata</taxon>
        <taxon>Euteleostomi</taxon>
        <taxon>Mammalia</taxon>
        <taxon>Eutheria</taxon>
        <taxon>Euarchontoglires</taxon>
        <taxon>Glires</taxon>
        <taxon>Rodentia</taxon>
        <taxon>Myomorpha</taxon>
        <taxon>Muroidea</taxon>
        <taxon>Muridae</taxon>
        <taxon>Murinae</taxon>
        <taxon>Mus</taxon>
        <taxon>Mus</taxon>
    </lineage>
</organism>
<feature type="chain" id="PRO_0000215330" description="Transient receptor potential cation channel subfamily M member 6">
    <location>
        <begin position="1"/>
        <end position="2028"/>
    </location>
</feature>
<feature type="chain" id="PRO_0000461406" description="TRPM6 kinase, cleaved form" evidence="4">
    <location>
        <begin status="unknown"/>
        <end position="2022"/>
    </location>
</feature>
<feature type="topological domain" description="Cytoplasmic" evidence="5">
    <location>
        <begin position="1"/>
        <end position="747"/>
    </location>
</feature>
<feature type="transmembrane region" description="Helical" evidence="5">
    <location>
        <begin position="748"/>
        <end position="768"/>
    </location>
</feature>
<feature type="topological domain" description="Extracellular" evidence="5">
    <location>
        <begin position="769"/>
        <end position="847"/>
    </location>
</feature>
<feature type="transmembrane region" description="Helical" evidence="5">
    <location>
        <begin position="848"/>
        <end position="868"/>
    </location>
</feature>
<feature type="topological domain" description="Cytoplasmic" evidence="5">
    <location>
        <begin position="869"/>
        <end position="910"/>
    </location>
</feature>
<feature type="transmembrane region" description="Helical" evidence="5">
    <location>
        <begin position="911"/>
        <end position="931"/>
    </location>
</feature>
<feature type="topological domain" description="Extracellular" evidence="5">
    <location>
        <begin position="932"/>
        <end position="945"/>
    </location>
</feature>
<feature type="transmembrane region" description="Helical" evidence="5">
    <location>
        <begin position="946"/>
        <end position="966"/>
    </location>
</feature>
<feature type="topological domain" description="Cytoplasmic" evidence="5">
    <location>
        <begin position="967"/>
        <end position="978"/>
    </location>
</feature>
<feature type="transmembrane region" description="Helical" evidence="5">
    <location>
        <begin position="979"/>
        <end position="999"/>
    </location>
</feature>
<feature type="topological domain" description="Extracellular" evidence="5">
    <location>
        <begin position="1000"/>
        <end position="1018"/>
    </location>
</feature>
<feature type="intramembrane region" description="Pore-forming" evidence="5">
    <location>
        <begin position="1019"/>
        <end position="1039"/>
    </location>
</feature>
<feature type="topological domain" description="Extracellular" evidence="5">
    <location>
        <begin position="1040"/>
        <end position="1053"/>
    </location>
</feature>
<feature type="transmembrane region" description="Helical" evidence="5">
    <location>
        <begin position="1054"/>
        <end position="1074"/>
    </location>
</feature>
<feature type="topological domain" description="Cytoplasmic" evidence="5">
    <location>
        <begin position="1075"/>
        <end position="2028"/>
    </location>
</feature>
<feature type="domain" description="Alpha-type protein kinase" evidence="6">
    <location>
        <begin position="1756"/>
        <end position="1986"/>
    </location>
</feature>
<feature type="region of interest" description="Disordered" evidence="7">
    <location>
        <begin position="577"/>
        <end position="601"/>
    </location>
</feature>
<feature type="region of interest" description="Disordered" evidence="7">
    <location>
        <begin position="1313"/>
        <end position="1339"/>
    </location>
</feature>
<feature type="region of interest" description="Disordered" evidence="7">
    <location>
        <begin position="1658"/>
        <end position="1694"/>
    </location>
</feature>
<feature type="region of interest" description="Disordered" evidence="7">
    <location>
        <begin position="2009"/>
        <end position="2028"/>
    </location>
</feature>
<feature type="compositionally biased region" description="Basic and acidic residues" evidence="7">
    <location>
        <begin position="580"/>
        <end position="590"/>
    </location>
</feature>
<feature type="compositionally biased region" description="Basic and acidic residues" evidence="7">
    <location>
        <begin position="1313"/>
        <end position="1323"/>
    </location>
</feature>
<feature type="compositionally biased region" description="Basic and acidic residues" evidence="7">
    <location>
        <begin position="1665"/>
        <end position="1677"/>
    </location>
</feature>
<feature type="compositionally biased region" description="Low complexity" evidence="7">
    <location>
        <begin position="1682"/>
        <end position="1694"/>
    </location>
</feature>
<feature type="compositionally biased region" description="Basic and acidic residues" evidence="7">
    <location>
        <begin position="2012"/>
        <end position="2028"/>
    </location>
</feature>
<feature type="active site" description="Proton acceptor" evidence="1">
    <location>
        <position position="1929"/>
    </location>
</feature>
<feature type="binding site" evidence="2">
    <location>
        <position position="1783"/>
    </location>
    <ligand>
        <name>ADP</name>
        <dbReference type="ChEBI" id="CHEBI:456216"/>
    </ligand>
</feature>
<feature type="binding site" evidence="2">
    <location>
        <position position="1784"/>
    </location>
    <ligand>
        <name>ADP</name>
        <dbReference type="ChEBI" id="CHEBI:456216"/>
    </ligand>
</feature>
<feature type="binding site" evidence="2">
    <location>
        <position position="1785"/>
    </location>
    <ligand>
        <name>ADP</name>
        <dbReference type="ChEBI" id="CHEBI:456216"/>
    </ligand>
</feature>
<feature type="binding site" evidence="2">
    <location>
        <position position="1786"/>
    </location>
    <ligand>
        <name>ADP</name>
        <dbReference type="ChEBI" id="CHEBI:456216"/>
    </ligand>
</feature>
<feature type="binding site" evidence="2">
    <location>
        <position position="1810"/>
    </location>
    <ligand>
        <name>ADP</name>
        <dbReference type="ChEBI" id="CHEBI:456216"/>
    </ligand>
</feature>
<feature type="binding site" evidence="2">
    <location>
        <position position="1882"/>
    </location>
    <ligand>
        <name>ADP</name>
        <dbReference type="ChEBI" id="CHEBI:456216"/>
    </ligand>
</feature>
<feature type="binding site" evidence="2">
    <location>
        <position position="1885"/>
    </location>
    <ligand>
        <name>ADP</name>
        <dbReference type="ChEBI" id="CHEBI:456216"/>
    </ligand>
</feature>
<feature type="binding site" evidence="2">
    <location>
        <position position="1915"/>
    </location>
    <ligand>
        <name>Zn(2+)</name>
        <dbReference type="ChEBI" id="CHEBI:29105"/>
    </ligand>
</feature>
<feature type="binding site" evidence="2">
    <location>
        <position position="1939"/>
    </location>
    <ligand>
        <name>ADP</name>
        <dbReference type="ChEBI" id="CHEBI:456216"/>
    </ligand>
</feature>
<feature type="binding site" evidence="2">
    <location>
        <position position="1972"/>
    </location>
    <ligand>
        <name>Zn(2+)</name>
        <dbReference type="ChEBI" id="CHEBI:29105"/>
    </ligand>
</feature>
<feature type="binding site" evidence="2">
    <location>
        <position position="1974"/>
    </location>
    <ligand>
        <name>Zn(2+)</name>
        <dbReference type="ChEBI" id="CHEBI:29105"/>
    </ligand>
</feature>
<feature type="binding site" evidence="2">
    <location>
        <position position="1978"/>
    </location>
    <ligand>
        <name>Zn(2+)</name>
        <dbReference type="ChEBI" id="CHEBI:29105"/>
    </ligand>
</feature>
<feature type="modified residue" description="Phosphothreonine; by autocatalysis" evidence="12">
    <location>
        <position position="1730"/>
    </location>
</feature>
<feature type="modified residue" description="Phosphothreonine; by autocatalysis" evidence="4">
    <location>
        <position position="1857"/>
    </location>
</feature>
<feature type="mutagenesis site" description="Abolishes protein kinase activity." evidence="10">
    <original>K</original>
    <variation>R</variation>
    <location>
        <position position="1810"/>
    </location>
</feature>
<name>TRPM6_MOUSE</name>
<evidence type="ECO:0000250" key="1"/>
<evidence type="ECO:0000250" key="2">
    <source>
        <dbReference type="UniProtKB" id="Q923J1"/>
    </source>
</evidence>
<evidence type="ECO:0000250" key="3">
    <source>
        <dbReference type="UniProtKB" id="Q96QT4"/>
    </source>
</evidence>
<evidence type="ECO:0000250" key="4">
    <source>
        <dbReference type="UniProtKB" id="Q9BX84"/>
    </source>
</evidence>
<evidence type="ECO:0000255" key="5"/>
<evidence type="ECO:0000255" key="6">
    <source>
        <dbReference type="PROSITE-ProRule" id="PRU00501"/>
    </source>
</evidence>
<evidence type="ECO:0000256" key="7">
    <source>
        <dbReference type="SAM" id="MobiDB-lite"/>
    </source>
</evidence>
<evidence type="ECO:0000269" key="8">
    <source>
    </source>
</evidence>
<evidence type="ECO:0000269" key="9">
    <source>
    </source>
</evidence>
<evidence type="ECO:0000269" key="10">
    <source>
    </source>
</evidence>
<evidence type="ECO:0000305" key="11"/>
<evidence type="ECO:0000305" key="12">
    <source>
    </source>
</evidence>